<proteinExistence type="evidence at transcript level"/>
<feature type="chain" id="PRO_0000290392" description="Ethylene-responsive transcription factor ERF043">
    <location>
        <begin position="1"/>
        <end position="221"/>
    </location>
</feature>
<feature type="DNA-binding region" description="AP2/ERF" evidence="2">
    <location>
        <begin position="18"/>
        <end position="75"/>
    </location>
</feature>
<feature type="region of interest" description="Disordered" evidence="3">
    <location>
        <begin position="111"/>
        <end position="134"/>
    </location>
</feature>
<feature type="compositionally biased region" description="Low complexity" evidence="3">
    <location>
        <begin position="116"/>
        <end position="134"/>
    </location>
</feature>
<gene>
    <name type="primary">ERF043</name>
    <name type="ordered locus">At4g32800</name>
    <name type="ORF">T16I18.10</name>
</gene>
<comment type="function">
    <text evidence="1">Probably acts as a transcriptional activator. Binds to the GCC-box pathogenesis-related promoter element. May be involved in the regulation of gene expression by stress factors and by components of stress signal transduction pathways (By similarity).</text>
</comment>
<comment type="subcellular location">
    <subcellularLocation>
        <location evidence="4">Nucleus</location>
    </subcellularLocation>
</comment>
<comment type="similarity">
    <text evidence="4">Belongs to the AP2/ERF transcription factor family. ERF subfamily.</text>
</comment>
<reference key="1">
    <citation type="journal article" date="1999" name="Nature">
        <title>Sequence and analysis of chromosome 4 of the plant Arabidopsis thaliana.</title>
        <authorList>
            <person name="Mayer K.F.X."/>
            <person name="Schueller C."/>
            <person name="Wambutt R."/>
            <person name="Murphy G."/>
            <person name="Volckaert G."/>
            <person name="Pohl T."/>
            <person name="Duesterhoeft A."/>
            <person name="Stiekema W."/>
            <person name="Entian K.-D."/>
            <person name="Terryn N."/>
            <person name="Harris B."/>
            <person name="Ansorge W."/>
            <person name="Brandt P."/>
            <person name="Grivell L.A."/>
            <person name="Rieger M."/>
            <person name="Weichselgartner M."/>
            <person name="de Simone V."/>
            <person name="Obermaier B."/>
            <person name="Mache R."/>
            <person name="Mueller M."/>
            <person name="Kreis M."/>
            <person name="Delseny M."/>
            <person name="Puigdomenech P."/>
            <person name="Watson M."/>
            <person name="Schmidtheini T."/>
            <person name="Reichert B."/>
            <person name="Portetelle D."/>
            <person name="Perez-Alonso M."/>
            <person name="Boutry M."/>
            <person name="Bancroft I."/>
            <person name="Vos P."/>
            <person name="Hoheisel J."/>
            <person name="Zimmermann W."/>
            <person name="Wedler H."/>
            <person name="Ridley P."/>
            <person name="Langham S.-A."/>
            <person name="McCullagh B."/>
            <person name="Bilham L."/>
            <person name="Robben J."/>
            <person name="van der Schueren J."/>
            <person name="Grymonprez B."/>
            <person name="Chuang Y.-J."/>
            <person name="Vandenbussche F."/>
            <person name="Braeken M."/>
            <person name="Weltjens I."/>
            <person name="Voet M."/>
            <person name="Bastiaens I."/>
            <person name="Aert R."/>
            <person name="Defoor E."/>
            <person name="Weitzenegger T."/>
            <person name="Bothe G."/>
            <person name="Ramsperger U."/>
            <person name="Hilbert H."/>
            <person name="Braun M."/>
            <person name="Holzer E."/>
            <person name="Brandt A."/>
            <person name="Peters S."/>
            <person name="van Staveren M."/>
            <person name="Dirkse W."/>
            <person name="Mooijman P."/>
            <person name="Klein Lankhorst R."/>
            <person name="Rose M."/>
            <person name="Hauf J."/>
            <person name="Koetter P."/>
            <person name="Berneiser S."/>
            <person name="Hempel S."/>
            <person name="Feldpausch M."/>
            <person name="Lamberth S."/>
            <person name="Van den Daele H."/>
            <person name="De Keyser A."/>
            <person name="Buysshaert C."/>
            <person name="Gielen J."/>
            <person name="Villarroel R."/>
            <person name="De Clercq R."/>
            <person name="van Montagu M."/>
            <person name="Rogers J."/>
            <person name="Cronin A."/>
            <person name="Quail M.A."/>
            <person name="Bray-Allen S."/>
            <person name="Clark L."/>
            <person name="Doggett J."/>
            <person name="Hall S."/>
            <person name="Kay M."/>
            <person name="Lennard N."/>
            <person name="McLay K."/>
            <person name="Mayes R."/>
            <person name="Pettett A."/>
            <person name="Rajandream M.A."/>
            <person name="Lyne M."/>
            <person name="Benes V."/>
            <person name="Rechmann S."/>
            <person name="Borkova D."/>
            <person name="Bloecker H."/>
            <person name="Scharfe M."/>
            <person name="Grimm M."/>
            <person name="Loehnert T.-H."/>
            <person name="Dose S."/>
            <person name="de Haan M."/>
            <person name="Maarse A.C."/>
            <person name="Schaefer M."/>
            <person name="Mueller-Auer S."/>
            <person name="Gabel C."/>
            <person name="Fuchs M."/>
            <person name="Fartmann B."/>
            <person name="Granderath K."/>
            <person name="Dauner D."/>
            <person name="Herzl A."/>
            <person name="Neumann S."/>
            <person name="Argiriou A."/>
            <person name="Vitale D."/>
            <person name="Liguori R."/>
            <person name="Piravandi E."/>
            <person name="Massenet O."/>
            <person name="Quigley F."/>
            <person name="Clabauld G."/>
            <person name="Muendlein A."/>
            <person name="Felber R."/>
            <person name="Schnabl S."/>
            <person name="Hiller R."/>
            <person name="Schmidt W."/>
            <person name="Lecharny A."/>
            <person name="Aubourg S."/>
            <person name="Chefdor F."/>
            <person name="Cooke R."/>
            <person name="Berger C."/>
            <person name="Monfort A."/>
            <person name="Casacuberta E."/>
            <person name="Gibbons T."/>
            <person name="Weber N."/>
            <person name="Vandenbol M."/>
            <person name="Bargues M."/>
            <person name="Terol J."/>
            <person name="Torres A."/>
            <person name="Perez-Perez A."/>
            <person name="Purnelle B."/>
            <person name="Bent E."/>
            <person name="Johnson S."/>
            <person name="Tacon D."/>
            <person name="Jesse T."/>
            <person name="Heijnen L."/>
            <person name="Schwarz S."/>
            <person name="Scholler P."/>
            <person name="Heber S."/>
            <person name="Francs P."/>
            <person name="Bielke C."/>
            <person name="Frishman D."/>
            <person name="Haase D."/>
            <person name="Lemcke K."/>
            <person name="Mewes H.-W."/>
            <person name="Stocker S."/>
            <person name="Zaccaria P."/>
            <person name="Bevan M."/>
            <person name="Wilson R.K."/>
            <person name="de la Bastide M."/>
            <person name="Habermann K."/>
            <person name="Parnell L."/>
            <person name="Dedhia N."/>
            <person name="Gnoj L."/>
            <person name="Schutz K."/>
            <person name="Huang E."/>
            <person name="Spiegel L."/>
            <person name="Sekhon M."/>
            <person name="Murray J."/>
            <person name="Sheet P."/>
            <person name="Cordes M."/>
            <person name="Abu-Threideh J."/>
            <person name="Stoneking T."/>
            <person name="Kalicki J."/>
            <person name="Graves T."/>
            <person name="Harmon G."/>
            <person name="Edwards J."/>
            <person name="Latreille P."/>
            <person name="Courtney L."/>
            <person name="Cloud J."/>
            <person name="Abbott A."/>
            <person name="Scott K."/>
            <person name="Johnson D."/>
            <person name="Minx P."/>
            <person name="Bentley D."/>
            <person name="Fulton B."/>
            <person name="Miller N."/>
            <person name="Greco T."/>
            <person name="Kemp K."/>
            <person name="Kramer J."/>
            <person name="Fulton L."/>
            <person name="Mardis E."/>
            <person name="Dante M."/>
            <person name="Pepin K."/>
            <person name="Hillier L.W."/>
            <person name="Nelson J."/>
            <person name="Spieth J."/>
            <person name="Ryan E."/>
            <person name="Andrews S."/>
            <person name="Geisel C."/>
            <person name="Layman D."/>
            <person name="Du H."/>
            <person name="Ali J."/>
            <person name="Berghoff A."/>
            <person name="Jones K."/>
            <person name="Drone K."/>
            <person name="Cotton M."/>
            <person name="Joshu C."/>
            <person name="Antonoiu B."/>
            <person name="Zidanic M."/>
            <person name="Strong C."/>
            <person name="Sun H."/>
            <person name="Lamar B."/>
            <person name="Yordan C."/>
            <person name="Ma P."/>
            <person name="Zhong J."/>
            <person name="Preston R."/>
            <person name="Vil D."/>
            <person name="Shekher M."/>
            <person name="Matero A."/>
            <person name="Shah R."/>
            <person name="Swaby I.K."/>
            <person name="O'Shaughnessy A."/>
            <person name="Rodriguez M."/>
            <person name="Hoffman J."/>
            <person name="Till S."/>
            <person name="Granat S."/>
            <person name="Shohdy N."/>
            <person name="Hasegawa A."/>
            <person name="Hameed A."/>
            <person name="Lodhi M."/>
            <person name="Johnson A."/>
            <person name="Chen E."/>
            <person name="Marra M.A."/>
            <person name="Martienssen R."/>
            <person name="McCombie W.R."/>
        </authorList>
    </citation>
    <scope>NUCLEOTIDE SEQUENCE [LARGE SCALE GENOMIC DNA]</scope>
    <source>
        <strain>cv. Columbia</strain>
    </source>
</reference>
<reference key="2">
    <citation type="journal article" date="2017" name="Plant J.">
        <title>Araport11: a complete reannotation of the Arabidopsis thaliana reference genome.</title>
        <authorList>
            <person name="Cheng C.Y."/>
            <person name="Krishnakumar V."/>
            <person name="Chan A.P."/>
            <person name="Thibaud-Nissen F."/>
            <person name="Schobel S."/>
            <person name="Town C.D."/>
        </authorList>
    </citation>
    <scope>GENOME REANNOTATION</scope>
    <source>
        <strain>cv. Columbia</strain>
    </source>
</reference>
<reference key="3">
    <citation type="journal article" date="2003" name="Science">
        <title>Empirical analysis of transcriptional activity in the Arabidopsis genome.</title>
        <authorList>
            <person name="Yamada K."/>
            <person name="Lim J."/>
            <person name="Dale J.M."/>
            <person name="Chen H."/>
            <person name="Shinn P."/>
            <person name="Palm C.J."/>
            <person name="Southwick A.M."/>
            <person name="Wu H.C."/>
            <person name="Kim C.J."/>
            <person name="Nguyen M."/>
            <person name="Pham P.K."/>
            <person name="Cheuk R.F."/>
            <person name="Karlin-Newmann G."/>
            <person name="Liu S.X."/>
            <person name="Lam B."/>
            <person name="Sakano H."/>
            <person name="Wu T."/>
            <person name="Yu G."/>
            <person name="Miranda M."/>
            <person name="Quach H.L."/>
            <person name="Tripp M."/>
            <person name="Chang C.H."/>
            <person name="Lee J.M."/>
            <person name="Toriumi M.J."/>
            <person name="Chan M.M."/>
            <person name="Tang C.C."/>
            <person name="Onodera C.S."/>
            <person name="Deng J.M."/>
            <person name="Akiyama K."/>
            <person name="Ansari Y."/>
            <person name="Arakawa T."/>
            <person name="Banh J."/>
            <person name="Banno F."/>
            <person name="Bowser L."/>
            <person name="Brooks S.Y."/>
            <person name="Carninci P."/>
            <person name="Chao Q."/>
            <person name="Choy N."/>
            <person name="Enju A."/>
            <person name="Goldsmith A.D."/>
            <person name="Gurjal M."/>
            <person name="Hansen N.F."/>
            <person name="Hayashizaki Y."/>
            <person name="Johnson-Hopson C."/>
            <person name="Hsuan V.W."/>
            <person name="Iida K."/>
            <person name="Karnes M."/>
            <person name="Khan S."/>
            <person name="Koesema E."/>
            <person name="Ishida J."/>
            <person name="Jiang P.X."/>
            <person name="Jones T."/>
            <person name="Kawai J."/>
            <person name="Kamiya A."/>
            <person name="Meyers C."/>
            <person name="Nakajima M."/>
            <person name="Narusaka M."/>
            <person name="Seki M."/>
            <person name="Sakurai T."/>
            <person name="Satou M."/>
            <person name="Tamse R."/>
            <person name="Vaysberg M."/>
            <person name="Wallender E.K."/>
            <person name="Wong C."/>
            <person name="Yamamura Y."/>
            <person name="Yuan S."/>
            <person name="Shinozaki K."/>
            <person name="Davis R.W."/>
            <person name="Theologis A."/>
            <person name="Ecker J.R."/>
        </authorList>
    </citation>
    <scope>NUCLEOTIDE SEQUENCE [LARGE SCALE MRNA]</scope>
    <source>
        <strain>cv. Columbia</strain>
    </source>
</reference>
<reference key="4">
    <citation type="submission" date="2002-03" db="EMBL/GenBank/DDBJ databases">
        <title>Full-length cDNA from Arabidopsis thaliana.</title>
        <authorList>
            <person name="Brover V.V."/>
            <person name="Troukhan M.E."/>
            <person name="Alexandrov N.A."/>
            <person name="Lu Y.-P."/>
            <person name="Flavell R.B."/>
            <person name="Feldmann K.A."/>
        </authorList>
    </citation>
    <scope>NUCLEOTIDE SEQUENCE [LARGE SCALE MRNA]</scope>
</reference>
<reference key="5">
    <citation type="journal article" date="2006" name="Plant Physiol.">
        <title>Genome-wide analysis of the ERF gene family in Arabidopsis and rice.</title>
        <authorList>
            <person name="Nakano T."/>
            <person name="Suzuki K."/>
            <person name="Fujimura T."/>
            <person name="Shinshi H."/>
        </authorList>
    </citation>
    <scope>GENE FAMILY</scope>
    <scope>NOMENCLATURE</scope>
</reference>
<protein>
    <recommendedName>
        <fullName>Ethylene-responsive transcription factor ERF043</fullName>
    </recommendedName>
</protein>
<sequence>MADSSSDKEKKENNKQPVYRGVRMRSWGKWVSEIREPRKKSRIWLGTFPTAEMAMRAHDVAAMSIKGTSAILNFPELSKLLPRPVSLSPRDVRAAATKAALMDFDTTAFRSDTETSETTTSNKMSESSESNETVSFSSSSWSSVTSIEESTVSDDLDEIVKLPSLGTSLNESNEFVIFDSLEDLVYMPRWLSGTEEEVFTYNNNDSSLNYSSVFESWKHFP</sequence>
<accession>Q9M080</accession>
<name>ERF43_ARATH</name>
<dbReference type="EMBL" id="AL161582">
    <property type="protein sequence ID" value="CAB79997.1"/>
    <property type="molecule type" value="Genomic_DNA"/>
</dbReference>
<dbReference type="EMBL" id="CP002687">
    <property type="protein sequence ID" value="AEE86120.1"/>
    <property type="molecule type" value="Genomic_DNA"/>
</dbReference>
<dbReference type="EMBL" id="BT002924">
    <property type="protein sequence ID" value="AAO22740.1"/>
    <property type="molecule type" value="mRNA"/>
</dbReference>
<dbReference type="EMBL" id="BT004343">
    <property type="protein sequence ID" value="AAO42337.1"/>
    <property type="molecule type" value="mRNA"/>
</dbReference>
<dbReference type="EMBL" id="AY088918">
    <property type="protein sequence ID" value="AAM67224.1"/>
    <property type="molecule type" value="mRNA"/>
</dbReference>
<dbReference type="PIR" id="T10687">
    <property type="entry name" value="T10687"/>
</dbReference>
<dbReference type="RefSeq" id="NP_195006.1">
    <property type="nucleotide sequence ID" value="NM_119433.3"/>
</dbReference>
<dbReference type="SMR" id="Q9M080"/>
<dbReference type="BioGRID" id="14701">
    <property type="interactions" value="1"/>
</dbReference>
<dbReference type="STRING" id="3702.Q9M080"/>
<dbReference type="PaxDb" id="3702-AT4G32800.1"/>
<dbReference type="EnsemblPlants" id="AT4G32800.1">
    <property type="protein sequence ID" value="AT4G32800.1"/>
    <property type="gene ID" value="AT4G32800"/>
</dbReference>
<dbReference type="GeneID" id="829416"/>
<dbReference type="Gramene" id="AT4G32800.1">
    <property type="protein sequence ID" value="AT4G32800.1"/>
    <property type="gene ID" value="AT4G32800"/>
</dbReference>
<dbReference type="KEGG" id="ath:AT4G32800"/>
<dbReference type="Araport" id="AT4G32800"/>
<dbReference type="TAIR" id="AT4G32800">
    <property type="gene designation" value="ERF043"/>
</dbReference>
<dbReference type="eggNOG" id="ENOG502R1TK">
    <property type="taxonomic scope" value="Eukaryota"/>
</dbReference>
<dbReference type="HOGENOM" id="CLU_063331_3_2_1"/>
<dbReference type="InParanoid" id="Q9M080"/>
<dbReference type="OMA" id="FCHVRSE"/>
<dbReference type="OrthoDB" id="1932364at2759"/>
<dbReference type="PhylomeDB" id="Q9M080"/>
<dbReference type="PRO" id="PR:Q9M080"/>
<dbReference type="Proteomes" id="UP000006548">
    <property type="component" value="Chromosome 4"/>
</dbReference>
<dbReference type="ExpressionAtlas" id="Q9M080">
    <property type="expression patterns" value="baseline and differential"/>
</dbReference>
<dbReference type="GO" id="GO:0005634">
    <property type="term" value="C:nucleus"/>
    <property type="evidence" value="ECO:0007669"/>
    <property type="project" value="UniProtKB-SubCell"/>
</dbReference>
<dbReference type="GO" id="GO:0003700">
    <property type="term" value="F:DNA-binding transcription factor activity"/>
    <property type="evidence" value="ECO:0000250"/>
    <property type="project" value="TAIR"/>
</dbReference>
<dbReference type="GO" id="GO:0000976">
    <property type="term" value="F:transcription cis-regulatory region binding"/>
    <property type="evidence" value="ECO:0000353"/>
    <property type="project" value="TAIR"/>
</dbReference>
<dbReference type="GO" id="GO:0009873">
    <property type="term" value="P:ethylene-activated signaling pathway"/>
    <property type="evidence" value="ECO:0007669"/>
    <property type="project" value="UniProtKB-KW"/>
</dbReference>
<dbReference type="CDD" id="cd00018">
    <property type="entry name" value="AP2"/>
    <property type="match status" value="1"/>
</dbReference>
<dbReference type="FunFam" id="3.30.730.10:FF:000001">
    <property type="entry name" value="Ethylene-responsive transcription factor 2"/>
    <property type="match status" value="1"/>
</dbReference>
<dbReference type="Gene3D" id="3.30.730.10">
    <property type="entry name" value="AP2/ERF domain"/>
    <property type="match status" value="1"/>
</dbReference>
<dbReference type="InterPro" id="IPR001471">
    <property type="entry name" value="AP2/ERF_dom"/>
</dbReference>
<dbReference type="InterPro" id="IPR036955">
    <property type="entry name" value="AP2/ERF_dom_sf"/>
</dbReference>
<dbReference type="InterPro" id="IPR051032">
    <property type="entry name" value="AP2/ERF_TF_ERF_subfamily"/>
</dbReference>
<dbReference type="InterPro" id="IPR016177">
    <property type="entry name" value="DNA-bd_dom_sf"/>
</dbReference>
<dbReference type="PANTHER" id="PTHR31985">
    <property type="entry name" value="ETHYLENE-RESPONSIVE TRANSCRIPTION FACTOR ERF042-RELATED"/>
    <property type="match status" value="1"/>
</dbReference>
<dbReference type="PANTHER" id="PTHR31985:SF241">
    <property type="entry name" value="ETHYLENE-RESPONSIVE TRANSCRIPTION FACTOR ERF043"/>
    <property type="match status" value="1"/>
</dbReference>
<dbReference type="Pfam" id="PF00847">
    <property type="entry name" value="AP2"/>
    <property type="match status" value="1"/>
</dbReference>
<dbReference type="PRINTS" id="PR00367">
    <property type="entry name" value="ETHRSPELEMNT"/>
</dbReference>
<dbReference type="SMART" id="SM00380">
    <property type="entry name" value="AP2"/>
    <property type="match status" value="1"/>
</dbReference>
<dbReference type="SUPFAM" id="SSF54171">
    <property type="entry name" value="DNA-binding domain"/>
    <property type="match status" value="1"/>
</dbReference>
<dbReference type="PROSITE" id="PS51032">
    <property type="entry name" value="AP2_ERF"/>
    <property type="match status" value="1"/>
</dbReference>
<evidence type="ECO:0000250" key="1"/>
<evidence type="ECO:0000255" key="2">
    <source>
        <dbReference type="PROSITE-ProRule" id="PRU00366"/>
    </source>
</evidence>
<evidence type="ECO:0000256" key="3">
    <source>
        <dbReference type="SAM" id="MobiDB-lite"/>
    </source>
</evidence>
<evidence type="ECO:0000305" key="4"/>
<organism>
    <name type="scientific">Arabidopsis thaliana</name>
    <name type="common">Mouse-ear cress</name>
    <dbReference type="NCBI Taxonomy" id="3702"/>
    <lineage>
        <taxon>Eukaryota</taxon>
        <taxon>Viridiplantae</taxon>
        <taxon>Streptophyta</taxon>
        <taxon>Embryophyta</taxon>
        <taxon>Tracheophyta</taxon>
        <taxon>Spermatophyta</taxon>
        <taxon>Magnoliopsida</taxon>
        <taxon>eudicotyledons</taxon>
        <taxon>Gunneridae</taxon>
        <taxon>Pentapetalae</taxon>
        <taxon>rosids</taxon>
        <taxon>malvids</taxon>
        <taxon>Brassicales</taxon>
        <taxon>Brassicaceae</taxon>
        <taxon>Camelineae</taxon>
        <taxon>Arabidopsis</taxon>
    </lineage>
</organism>
<keyword id="KW-0010">Activator</keyword>
<keyword id="KW-0238">DNA-binding</keyword>
<keyword id="KW-0936">Ethylene signaling pathway</keyword>
<keyword id="KW-0539">Nucleus</keyword>
<keyword id="KW-1185">Reference proteome</keyword>
<keyword id="KW-0804">Transcription</keyword>
<keyword id="KW-0805">Transcription regulation</keyword>